<proteinExistence type="inferred from homology"/>
<gene>
    <name evidence="7" type="primary">Taar4</name>
    <name evidence="5" type="synonym">Ta2</name>
    <name type="synonym">Tar2</name>
    <name type="synonym">Trar2</name>
</gene>
<evidence type="ECO:0000250" key="1">
    <source>
        <dbReference type="UniProtKB" id="Q5QD04"/>
    </source>
</evidence>
<evidence type="ECO:0000250" key="2">
    <source>
        <dbReference type="UniProtKB" id="Q5QD15"/>
    </source>
</evidence>
<evidence type="ECO:0000255" key="3"/>
<evidence type="ECO:0000255" key="4">
    <source>
        <dbReference type="PROSITE-ProRule" id="PRU00521"/>
    </source>
</evidence>
<evidence type="ECO:0000303" key="5">
    <source>
    </source>
</evidence>
<evidence type="ECO:0000305" key="6"/>
<evidence type="ECO:0000312" key="7">
    <source>
        <dbReference type="RGD" id="631382"/>
    </source>
</evidence>
<name>TAAR4_RAT</name>
<accession>Q923Y7</accession>
<reference key="1">
    <citation type="journal article" date="2001" name="Proc. Natl. Acad. Sci. U.S.A.">
        <title>Trace amines: identification of a family of mammalian G protein-coupled receptors.</title>
        <authorList>
            <person name="Borowsky B."/>
            <person name="Adham N."/>
            <person name="Jones K.A."/>
            <person name="Raddatz R."/>
            <person name="Artymyshyn R."/>
            <person name="Ogozalek K.L."/>
            <person name="Durkin M.M."/>
            <person name="Lakhlani P.P."/>
            <person name="Bonini J.A."/>
            <person name="Pathirana S."/>
            <person name="Boyle N."/>
            <person name="Pu X."/>
            <person name="Kouranova E."/>
            <person name="Lichtblau H."/>
            <person name="Ochoa F.Y."/>
            <person name="Branchek T.A."/>
            <person name="Gerald C."/>
        </authorList>
    </citation>
    <scope>NUCLEOTIDE SEQUENCE [GENOMIC DNA]</scope>
    <source>
        <strain>Sprague-Dawley</strain>
    </source>
</reference>
<protein>
    <recommendedName>
        <fullName>Trace amine-associated receptor 4</fullName>
        <shortName>TaR-4</shortName>
        <shortName>Trace amine receptor 4</shortName>
    </recommendedName>
    <alternativeName>
        <fullName>2-phenylethylamine receptor</fullName>
    </alternativeName>
    <alternativeName>
        <fullName evidence="5">Trace amine receptor 2</fullName>
        <shortName evidence="5">TaR-2</shortName>
    </alternativeName>
</protein>
<comment type="function">
    <text evidence="2">Olfactory receptor specific for 2-phenylethylamine, a trace amine present at high concentration in the urine of carnivore species, playing a key role in fear and avoidance responses. 2-phenylethylamine acts as a kairomone in the chemical detection of carnivore odor and triggers fear in rats. This receptor is probably mediated by the G(s)-class of G-proteins which activate adenylate cyclase.</text>
</comment>
<comment type="subcellular location">
    <subcellularLocation>
        <location evidence="6">Cell membrane</location>
        <topology evidence="3">Multi-pass membrane protein</topology>
    </subcellularLocation>
</comment>
<comment type="similarity">
    <text evidence="4">Belongs to the G-protein coupled receptor 1 family.</text>
</comment>
<feature type="chain" id="PRO_0000070153" description="Trace amine-associated receptor 4">
    <location>
        <begin position="1"/>
        <end position="347"/>
    </location>
</feature>
<feature type="topological domain" description="Extracellular" evidence="3">
    <location>
        <begin position="1"/>
        <end position="37"/>
    </location>
</feature>
<feature type="transmembrane region" description="Helical; Name=1" evidence="3">
    <location>
        <begin position="38"/>
        <end position="58"/>
    </location>
</feature>
<feature type="topological domain" description="Cytoplasmic" evidence="3">
    <location>
        <begin position="59"/>
        <end position="69"/>
    </location>
</feature>
<feature type="transmembrane region" description="Helical; Name=2" evidence="3">
    <location>
        <begin position="70"/>
        <end position="90"/>
    </location>
</feature>
<feature type="topological domain" description="Extracellular" evidence="3">
    <location>
        <begin position="91"/>
        <end position="110"/>
    </location>
</feature>
<feature type="transmembrane region" description="Helical; Name=3" evidence="3">
    <location>
        <begin position="111"/>
        <end position="129"/>
    </location>
</feature>
<feature type="topological domain" description="Cytoplasmic" evidence="3">
    <location>
        <begin position="130"/>
        <end position="149"/>
    </location>
</feature>
<feature type="transmembrane region" description="Helical; Name=4" evidence="3">
    <location>
        <begin position="150"/>
        <end position="170"/>
    </location>
</feature>
<feature type="topological domain" description="Extracellular" evidence="3">
    <location>
        <begin position="171"/>
        <end position="197"/>
    </location>
</feature>
<feature type="transmembrane region" description="Helical; Name=5" evidence="3">
    <location>
        <begin position="198"/>
        <end position="218"/>
    </location>
</feature>
<feature type="topological domain" description="Cytoplasmic" evidence="3">
    <location>
        <begin position="219"/>
        <end position="260"/>
    </location>
</feature>
<feature type="transmembrane region" description="Helical; Name=6" evidence="3">
    <location>
        <begin position="261"/>
        <end position="281"/>
    </location>
</feature>
<feature type="topological domain" description="Extracellular" evidence="3">
    <location>
        <begin position="282"/>
        <end position="296"/>
    </location>
</feature>
<feature type="transmembrane region" description="Helical; Name=7" evidence="3">
    <location>
        <begin position="297"/>
        <end position="317"/>
    </location>
</feature>
<feature type="topological domain" description="Cytoplasmic" evidence="3">
    <location>
        <begin position="318"/>
        <end position="347"/>
    </location>
</feature>
<feature type="region of interest" description="Extracellular Loop 2 (ECL2)" evidence="1">
    <location>
        <begin position="175"/>
        <end position="188"/>
    </location>
</feature>
<feature type="glycosylation site" description="N-linked (GlcNAc...) asparagine" evidence="3">
    <location>
        <position position="20"/>
    </location>
</feature>
<feature type="disulfide bond" evidence="1">
    <location>
        <begin position="23"/>
        <end position="187"/>
    </location>
</feature>
<feature type="disulfide bond" evidence="4">
    <location>
        <begin position="106"/>
        <end position="191"/>
    </location>
</feature>
<keyword id="KW-0085">Behavior</keyword>
<keyword id="KW-1003">Cell membrane</keyword>
<keyword id="KW-1015">Disulfide bond</keyword>
<keyword id="KW-0297">G-protein coupled receptor</keyword>
<keyword id="KW-0325">Glycoprotein</keyword>
<keyword id="KW-0472">Membrane</keyword>
<keyword id="KW-0675">Receptor</keyword>
<keyword id="KW-1185">Reference proteome</keyword>
<keyword id="KW-0807">Transducer</keyword>
<keyword id="KW-0812">Transmembrane</keyword>
<keyword id="KW-1133">Transmembrane helix</keyword>
<dbReference type="EMBL" id="AF380188">
    <property type="protein sequence ID" value="AAK71239.1"/>
    <property type="molecule type" value="Genomic_DNA"/>
</dbReference>
<dbReference type="RefSeq" id="NP_783173.1">
    <property type="nucleotide sequence ID" value="NM_175583.1"/>
</dbReference>
<dbReference type="SMR" id="Q923Y7"/>
<dbReference type="FunCoup" id="Q923Y7">
    <property type="interactions" value="32"/>
</dbReference>
<dbReference type="STRING" id="10116.ENSRNOP00000050289"/>
<dbReference type="GlyCosmos" id="Q923Y7">
    <property type="glycosylation" value="1 site, No reported glycans"/>
</dbReference>
<dbReference type="GlyGen" id="Q923Y7">
    <property type="glycosylation" value="1 site"/>
</dbReference>
<dbReference type="PaxDb" id="10116-ENSRNOP00000050289"/>
<dbReference type="Ensembl" id="ENSRNOT00000047810.2">
    <property type="protein sequence ID" value="ENSRNOP00000050289.1"/>
    <property type="gene ID" value="ENSRNOG00000029877.2"/>
</dbReference>
<dbReference type="GeneID" id="294122"/>
<dbReference type="KEGG" id="rno:294122"/>
<dbReference type="AGR" id="RGD:631382"/>
<dbReference type="CTD" id="209513"/>
<dbReference type="RGD" id="631382">
    <property type="gene designation" value="Taar4"/>
</dbReference>
<dbReference type="eggNOG" id="KOG3656">
    <property type="taxonomic scope" value="Eukaryota"/>
</dbReference>
<dbReference type="GeneTree" id="ENSGT00940000162730"/>
<dbReference type="HOGENOM" id="CLU_009579_11_0_1"/>
<dbReference type="InParanoid" id="Q923Y7"/>
<dbReference type="OMA" id="LWNPPEV"/>
<dbReference type="OrthoDB" id="10042731at2759"/>
<dbReference type="PhylomeDB" id="Q923Y7"/>
<dbReference type="TreeFam" id="TF343107"/>
<dbReference type="PRO" id="PR:Q923Y7"/>
<dbReference type="Proteomes" id="UP000002494">
    <property type="component" value="Chromosome 1"/>
</dbReference>
<dbReference type="Bgee" id="ENSRNOG00000029877">
    <property type="expression patterns" value="Expressed in testis and 1 other cell type or tissue"/>
</dbReference>
<dbReference type="ExpressionAtlas" id="Q923Y7">
    <property type="expression patterns" value="baseline and differential"/>
</dbReference>
<dbReference type="GO" id="GO:0005886">
    <property type="term" value="C:plasma membrane"/>
    <property type="evidence" value="ECO:0000318"/>
    <property type="project" value="GO_Central"/>
</dbReference>
<dbReference type="GO" id="GO:1990080">
    <property type="term" value="F:2-phenylethylamine receptor activity"/>
    <property type="evidence" value="ECO:0000318"/>
    <property type="project" value="GO_Central"/>
</dbReference>
<dbReference type="GO" id="GO:0008227">
    <property type="term" value="F:G protein-coupled amine receptor activity"/>
    <property type="evidence" value="ECO:0000314"/>
    <property type="project" value="MGI"/>
</dbReference>
<dbReference type="GO" id="GO:0001594">
    <property type="term" value="F:trace-amine receptor activity"/>
    <property type="evidence" value="ECO:0000314"/>
    <property type="project" value="MGI"/>
</dbReference>
<dbReference type="GO" id="GO:0001662">
    <property type="term" value="P:behavioral fear response"/>
    <property type="evidence" value="ECO:0000318"/>
    <property type="project" value="GO_Central"/>
</dbReference>
<dbReference type="GO" id="GO:0007635">
    <property type="term" value="P:chemosensory behavior"/>
    <property type="evidence" value="ECO:0000318"/>
    <property type="project" value="GO_Central"/>
</dbReference>
<dbReference type="GO" id="GO:0007186">
    <property type="term" value="P:G protein-coupled receptor signaling pathway"/>
    <property type="evidence" value="ECO:0000318"/>
    <property type="project" value="GO_Central"/>
</dbReference>
<dbReference type="CDD" id="cd15312">
    <property type="entry name" value="7tmA_TAAR2_3_4"/>
    <property type="match status" value="1"/>
</dbReference>
<dbReference type="FunFam" id="1.20.1070.10:FF:000030">
    <property type="entry name" value="trace amine-associated receptor 1"/>
    <property type="match status" value="1"/>
</dbReference>
<dbReference type="Gene3D" id="1.20.1070.10">
    <property type="entry name" value="Rhodopsin 7-helix transmembrane proteins"/>
    <property type="match status" value="1"/>
</dbReference>
<dbReference type="InterPro" id="IPR000276">
    <property type="entry name" value="GPCR_Rhodpsn"/>
</dbReference>
<dbReference type="InterPro" id="IPR017452">
    <property type="entry name" value="GPCR_Rhodpsn_7TM"/>
</dbReference>
<dbReference type="InterPro" id="IPR050569">
    <property type="entry name" value="TAAR"/>
</dbReference>
<dbReference type="InterPro" id="IPR009132">
    <property type="entry name" value="TAAR_fam"/>
</dbReference>
<dbReference type="PANTHER" id="PTHR24249">
    <property type="entry name" value="HISTAMINE RECEPTOR-RELATED G-PROTEIN COUPLED RECEPTOR"/>
    <property type="match status" value="1"/>
</dbReference>
<dbReference type="PANTHER" id="PTHR24249:SF220">
    <property type="entry name" value="TRACE AMINE-ASSOCIATED RECEPTOR 4"/>
    <property type="match status" value="1"/>
</dbReference>
<dbReference type="Pfam" id="PF00001">
    <property type="entry name" value="7tm_1"/>
    <property type="match status" value="1"/>
</dbReference>
<dbReference type="PRINTS" id="PR00237">
    <property type="entry name" value="GPCRRHODOPSN"/>
</dbReference>
<dbReference type="PRINTS" id="PR01830">
    <property type="entry name" value="TRACEAMINER"/>
</dbReference>
<dbReference type="SMART" id="SM01381">
    <property type="entry name" value="7TM_GPCR_Srsx"/>
    <property type="match status" value="1"/>
</dbReference>
<dbReference type="SUPFAM" id="SSF81321">
    <property type="entry name" value="Family A G protein-coupled receptor-like"/>
    <property type="match status" value="1"/>
</dbReference>
<dbReference type="PROSITE" id="PS00237">
    <property type="entry name" value="G_PROTEIN_RECEP_F1_1"/>
    <property type="match status" value="1"/>
</dbReference>
<dbReference type="PROSITE" id="PS50262">
    <property type="entry name" value="G_PROTEIN_RECEP_F1_2"/>
    <property type="match status" value="1"/>
</dbReference>
<organism>
    <name type="scientific">Rattus norvegicus</name>
    <name type="common">Rat</name>
    <dbReference type="NCBI Taxonomy" id="10116"/>
    <lineage>
        <taxon>Eukaryota</taxon>
        <taxon>Metazoa</taxon>
        <taxon>Chordata</taxon>
        <taxon>Craniata</taxon>
        <taxon>Vertebrata</taxon>
        <taxon>Euteleostomi</taxon>
        <taxon>Mammalia</taxon>
        <taxon>Eutheria</taxon>
        <taxon>Euarchontoglires</taxon>
        <taxon>Glires</taxon>
        <taxon>Rodentia</taxon>
        <taxon>Myomorpha</taxon>
        <taxon>Muroidea</taxon>
        <taxon>Muridae</taxon>
        <taxon>Murinae</taxon>
        <taxon>Rattus</taxon>
    </lineage>
</organism>
<sequence length="347" mass="38783">MNSPDLWYSPETQFCFAAANNSCPRKARPALVVCAMYLVMIGAIVMTMLGNMVVIISIAHFKQLHSPTNFLILSMATTDFLLSCVVMPFSMVRSIESCWYFGDLFCKVHSCCDIMLCTTSIFHLCFISVDRHYAVCDPLHYVTQITVGVVGVFLLISWSVPILFAFGLVFSELNLIGAEDFVAAIDCTGLCVLIFNKLWGVLASFIAFFLPGAIMVGIYIHIFTVARKHARKIGPGPRTKRALSESKMKATSGKESKATKTLSIVMGVFVLCWLPFFVLTITDPFIGFTTPEDLYNVFLWLGYFNSTFNPIIYGMFYPWFRKALRMIVTGTIFRSDSSTSSLHPAHP</sequence>